<sequence>MEEEVPGFYGESGKSVQATLSSLKMLDVGKWPIFSLCSEEELQLIRQACVFGSAGNEVLYTTVNDEIFVLGTNCSGCLGVGDIQSTIEPRRLDSLTGKKIASLSYGSGPHIVLATTDGEVFTWGHNAYSQLGNGTTNHGLVPCHISTNLSNKQVIEVACGSYHSLVLTSDGEVFAWGYNNSGQVGSGSTANQPIPRRVTGCLQNKVVMNIACGQMCSMAVVDTGEVYVWGYNGNGQLGLGSSGNQPTPCRVAALQGIRVQRVACGYAHTLVLTDEGQIYAWGANSYGQLGTGNKSNQSYPTPVVVEKDRIIEIAACHSAHTSAAKTQGGHVYMWGQCRGQSVILPHHTHFCCTDDVFACFATPAVTWRLLSVEPDDHLTVAESLKREFDNPDTADLKFLVDGKYIYAHKVLLKIRCEHFRSSLEDSEDDIVEMSEFSYPVFRAFLEYLYTDNISLSPEEAVGLLDLATFYSETRLKKLCQQTIKQGICEENAIALLSAAVKYDAQDLEEFCFRFCINHLTVVTQTSGFAEMDHDLLKNFISKASRVGAFKN</sequence>
<comment type="subcellular location">
    <subcellularLocation>
        <location evidence="3">Cytoplasmic vesicle</location>
        <location evidence="3">Secretory vesicle</location>
        <location evidence="3">Acrosome</location>
    </subcellularLocation>
    <text evidence="3">Mainly found in the acrosomal cap region.</text>
</comment>
<comment type="alternative products">
    <event type="alternative splicing"/>
    <isoform>
        <id>Q99LJ7-1</id>
        <name>1</name>
        <sequence type="displayed"/>
    </isoform>
    <isoform>
        <id>Q99LJ7-2</id>
        <name>2</name>
        <sequence type="described" ref="VSP_016724"/>
    </isoform>
</comment>
<comment type="tissue specificity">
    <text evidence="3">Expressed in testis and heart (at protein level).</text>
</comment>
<comment type="developmental stage">
    <text evidence="3">Expressed in testis from postnatal day 12 onwards, reaching maximal levels at postnatal day 30 (at protein level).</text>
</comment>
<comment type="domain">
    <text evidence="3">The BTB domain might play a role in targeting to acrosomal vesicles.</text>
</comment>
<gene>
    <name type="primary">Rcbtb2</name>
    <name type="synonym">Chc1l</name>
</gene>
<reference key="1">
    <citation type="journal article" date="2012" name="PLoS ONE">
        <title>Mouse RC/BTB2, a member of the RCC1 superfamily, localizes to spermatid acrosomal vesicles.</title>
        <authorList>
            <person name="Wang J."/>
            <person name="Teves M.E."/>
            <person name="Shen X."/>
            <person name="Nagarkatti-Gude D.R."/>
            <person name="Hess R.A."/>
            <person name="Henderson S.C."/>
            <person name="Strauss J.F. III"/>
            <person name="Zhang Z."/>
        </authorList>
    </citation>
    <scope>NUCLEOTIDE SEQUENCE [MRNA] (ISOFORM 1)</scope>
    <scope>SUBCELLULAR LOCATION</scope>
    <scope>TISSUE SPECIFICITY</scope>
    <scope>DEVELOPMENTAL STAGE</scope>
    <scope>DOMAIN</scope>
    <source>
        <strain evidence="6">C57BL/6J</strain>
    </source>
</reference>
<reference key="2">
    <citation type="journal article" date="2005" name="Science">
        <title>The transcriptional landscape of the mammalian genome.</title>
        <authorList>
            <person name="Carninci P."/>
            <person name="Kasukawa T."/>
            <person name="Katayama S."/>
            <person name="Gough J."/>
            <person name="Frith M.C."/>
            <person name="Maeda N."/>
            <person name="Oyama R."/>
            <person name="Ravasi T."/>
            <person name="Lenhard B."/>
            <person name="Wells C."/>
            <person name="Kodzius R."/>
            <person name="Shimokawa K."/>
            <person name="Bajic V.B."/>
            <person name="Brenner S.E."/>
            <person name="Batalov S."/>
            <person name="Forrest A.R."/>
            <person name="Zavolan M."/>
            <person name="Davis M.J."/>
            <person name="Wilming L.G."/>
            <person name="Aidinis V."/>
            <person name="Allen J.E."/>
            <person name="Ambesi-Impiombato A."/>
            <person name="Apweiler R."/>
            <person name="Aturaliya R.N."/>
            <person name="Bailey T.L."/>
            <person name="Bansal M."/>
            <person name="Baxter L."/>
            <person name="Beisel K.W."/>
            <person name="Bersano T."/>
            <person name="Bono H."/>
            <person name="Chalk A.M."/>
            <person name="Chiu K.P."/>
            <person name="Choudhary V."/>
            <person name="Christoffels A."/>
            <person name="Clutterbuck D.R."/>
            <person name="Crowe M.L."/>
            <person name="Dalla E."/>
            <person name="Dalrymple B.P."/>
            <person name="de Bono B."/>
            <person name="Della Gatta G."/>
            <person name="di Bernardo D."/>
            <person name="Down T."/>
            <person name="Engstrom P."/>
            <person name="Fagiolini M."/>
            <person name="Faulkner G."/>
            <person name="Fletcher C.F."/>
            <person name="Fukushima T."/>
            <person name="Furuno M."/>
            <person name="Futaki S."/>
            <person name="Gariboldi M."/>
            <person name="Georgii-Hemming P."/>
            <person name="Gingeras T.R."/>
            <person name="Gojobori T."/>
            <person name="Green R.E."/>
            <person name="Gustincich S."/>
            <person name="Harbers M."/>
            <person name="Hayashi Y."/>
            <person name="Hensch T.K."/>
            <person name="Hirokawa N."/>
            <person name="Hill D."/>
            <person name="Huminiecki L."/>
            <person name="Iacono M."/>
            <person name="Ikeo K."/>
            <person name="Iwama A."/>
            <person name="Ishikawa T."/>
            <person name="Jakt M."/>
            <person name="Kanapin A."/>
            <person name="Katoh M."/>
            <person name="Kawasawa Y."/>
            <person name="Kelso J."/>
            <person name="Kitamura H."/>
            <person name="Kitano H."/>
            <person name="Kollias G."/>
            <person name="Krishnan S.P."/>
            <person name="Kruger A."/>
            <person name="Kummerfeld S.K."/>
            <person name="Kurochkin I.V."/>
            <person name="Lareau L.F."/>
            <person name="Lazarevic D."/>
            <person name="Lipovich L."/>
            <person name="Liu J."/>
            <person name="Liuni S."/>
            <person name="McWilliam S."/>
            <person name="Madan Babu M."/>
            <person name="Madera M."/>
            <person name="Marchionni L."/>
            <person name="Matsuda H."/>
            <person name="Matsuzawa S."/>
            <person name="Miki H."/>
            <person name="Mignone F."/>
            <person name="Miyake S."/>
            <person name="Morris K."/>
            <person name="Mottagui-Tabar S."/>
            <person name="Mulder N."/>
            <person name="Nakano N."/>
            <person name="Nakauchi H."/>
            <person name="Ng P."/>
            <person name="Nilsson R."/>
            <person name="Nishiguchi S."/>
            <person name="Nishikawa S."/>
            <person name="Nori F."/>
            <person name="Ohara O."/>
            <person name="Okazaki Y."/>
            <person name="Orlando V."/>
            <person name="Pang K.C."/>
            <person name="Pavan W.J."/>
            <person name="Pavesi G."/>
            <person name="Pesole G."/>
            <person name="Petrovsky N."/>
            <person name="Piazza S."/>
            <person name="Reed J."/>
            <person name="Reid J.F."/>
            <person name="Ring B.Z."/>
            <person name="Ringwald M."/>
            <person name="Rost B."/>
            <person name="Ruan Y."/>
            <person name="Salzberg S.L."/>
            <person name="Sandelin A."/>
            <person name="Schneider C."/>
            <person name="Schoenbach C."/>
            <person name="Sekiguchi K."/>
            <person name="Semple C.A."/>
            <person name="Seno S."/>
            <person name="Sessa L."/>
            <person name="Sheng Y."/>
            <person name="Shibata Y."/>
            <person name="Shimada H."/>
            <person name="Shimada K."/>
            <person name="Silva D."/>
            <person name="Sinclair B."/>
            <person name="Sperling S."/>
            <person name="Stupka E."/>
            <person name="Sugiura K."/>
            <person name="Sultana R."/>
            <person name="Takenaka Y."/>
            <person name="Taki K."/>
            <person name="Tammoja K."/>
            <person name="Tan S.L."/>
            <person name="Tang S."/>
            <person name="Taylor M.S."/>
            <person name="Tegner J."/>
            <person name="Teichmann S.A."/>
            <person name="Ueda H.R."/>
            <person name="van Nimwegen E."/>
            <person name="Verardo R."/>
            <person name="Wei C.L."/>
            <person name="Yagi K."/>
            <person name="Yamanishi H."/>
            <person name="Zabarovsky E."/>
            <person name="Zhu S."/>
            <person name="Zimmer A."/>
            <person name="Hide W."/>
            <person name="Bult C."/>
            <person name="Grimmond S.M."/>
            <person name="Teasdale R.D."/>
            <person name="Liu E.T."/>
            <person name="Brusic V."/>
            <person name="Quackenbush J."/>
            <person name="Wahlestedt C."/>
            <person name="Mattick J.S."/>
            <person name="Hume D.A."/>
            <person name="Kai C."/>
            <person name="Sasaki D."/>
            <person name="Tomaru Y."/>
            <person name="Fukuda S."/>
            <person name="Kanamori-Katayama M."/>
            <person name="Suzuki M."/>
            <person name="Aoki J."/>
            <person name="Arakawa T."/>
            <person name="Iida J."/>
            <person name="Imamura K."/>
            <person name="Itoh M."/>
            <person name="Kato T."/>
            <person name="Kawaji H."/>
            <person name="Kawagashira N."/>
            <person name="Kawashima T."/>
            <person name="Kojima M."/>
            <person name="Kondo S."/>
            <person name="Konno H."/>
            <person name="Nakano K."/>
            <person name="Ninomiya N."/>
            <person name="Nishio T."/>
            <person name="Okada M."/>
            <person name="Plessy C."/>
            <person name="Shibata K."/>
            <person name="Shiraki T."/>
            <person name="Suzuki S."/>
            <person name="Tagami M."/>
            <person name="Waki K."/>
            <person name="Watahiki A."/>
            <person name="Okamura-Oho Y."/>
            <person name="Suzuki H."/>
            <person name="Kawai J."/>
            <person name="Hayashizaki Y."/>
        </authorList>
    </citation>
    <scope>NUCLEOTIDE SEQUENCE [LARGE SCALE MRNA] (ISOFORMS 1 AND 2)</scope>
    <source>
        <strain>C57BL/6J</strain>
        <tissue>Forelimb</tissue>
    </source>
</reference>
<reference key="3">
    <citation type="journal article" date="2009" name="PLoS Biol.">
        <title>Lineage-specific biology revealed by a finished genome assembly of the mouse.</title>
        <authorList>
            <person name="Church D.M."/>
            <person name="Goodstadt L."/>
            <person name="Hillier L.W."/>
            <person name="Zody M.C."/>
            <person name="Goldstein S."/>
            <person name="She X."/>
            <person name="Bult C.J."/>
            <person name="Agarwala R."/>
            <person name="Cherry J.L."/>
            <person name="DiCuccio M."/>
            <person name="Hlavina W."/>
            <person name="Kapustin Y."/>
            <person name="Meric P."/>
            <person name="Maglott D."/>
            <person name="Birtle Z."/>
            <person name="Marques A.C."/>
            <person name="Graves T."/>
            <person name="Zhou S."/>
            <person name="Teague B."/>
            <person name="Potamousis K."/>
            <person name="Churas C."/>
            <person name="Place M."/>
            <person name="Herschleb J."/>
            <person name="Runnheim R."/>
            <person name="Forrest D."/>
            <person name="Amos-Landgraf J."/>
            <person name="Schwartz D.C."/>
            <person name="Cheng Z."/>
            <person name="Lindblad-Toh K."/>
            <person name="Eichler E.E."/>
            <person name="Ponting C.P."/>
        </authorList>
    </citation>
    <scope>NUCLEOTIDE SEQUENCE [LARGE SCALE GENOMIC DNA]</scope>
    <source>
        <strain>C57BL/6J</strain>
    </source>
</reference>
<reference key="4">
    <citation type="submission" date="2005-09" db="EMBL/GenBank/DDBJ databases">
        <authorList>
            <person name="Mural R.J."/>
            <person name="Adams M.D."/>
            <person name="Myers E.W."/>
            <person name="Smith H.O."/>
            <person name="Venter J.C."/>
        </authorList>
    </citation>
    <scope>NUCLEOTIDE SEQUENCE [LARGE SCALE GENOMIC DNA]</scope>
</reference>
<reference key="5">
    <citation type="journal article" date="2004" name="Genome Res.">
        <title>The status, quality, and expansion of the NIH full-length cDNA project: the Mammalian Gene Collection (MGC).</title>
        <authorList>
            <consortium name="The MGC Project Team"/>
        </authorList>
    </citation>
    <scope>NUCLEOTIDE SEQUENCE [LARGE SCALE MRNA] (ISOFORM 1)</scope>
    <source>
        <strain>FVB/N</strain>
        <tissue>Mammary tumor</tissue>
    </source>
</reference>
<name>RCBT2_MOUSE</name>
<protein>
    <recommendedName>
        <fullName>RCC1 and BTB domain-containing protein 2</fullName>
    </recommendedName>
    <alternativeName>
        <fullName>Chromosome condensation 1-like</fullName>
    </alternativeName>
    <alternativeName>
        <fullName>Regulator of chromosome condensation and BTB domain-containing protein 2</fullName>
    </alternativeName>
</protein>
<dbReference type="EMBL" id="JN086338">
    <property type="protein sequence ID" value="AEK06433.1"/>
    <property type="molecule type" value="mRNA"/>
</dbReference>
<dbReference type="EMBL" id="JN086339">
    <property type="protein sequence ID" value="AEK06434.1"/>
    <property type="molecule type" value="mRNA"/>
</dbReference>
<dbReference type="EMBL" id="AK031242">
    <property type="protein sequence ID" value="BAC27316.1"/>
    <property type="molecule type" value="mRNA"/>
</dbReference>
<dbReference type="EMBL" id="AK031248">
    <property type="protein sequence ID" value="BAC27319.1"/>
    <property type="molecule type" value="mRNA"/>
</dbReference>
<dbReference type="EMBL" id="AK160881">
    <property type="protein sequence ID" value="BAE36068.1"/>
    <property type="molecule type" value="mRNA"/>
</dbReference>
<dbReference type="EMBL" id="CT571265">
    <property type="status" value="NOT_ANNOTATED_CDS"/>
    <property type="molecule type" value="Genomic_DNA"/>
</dbReference>
<dbReference type="EMBL" id="CH466535">
    <property type="protein sequence ID" value="EDL35861.1"/>
    <property type="molecule type" value="Genomic_DNA"/>
</dbReference>
<dbReference type="EMBL" id="BC003224">
    <property type="protein sequence ID" value="AAH03224.1"/>
    <property type="molecule type" value="mRNA"/>
</dbReference>
<dbReference type="CCDS" id="CCDS27266.1">
    <molecule id="Q99LJ7-1"/>
</dbReference>
<dbReference type="RefSeq" id="NP_001164165.1">
    <molecule id="Q99LJ7-1"/>
    <property type="nucleotide sequence ID" value="NM_001170694.1"/>
</dbReference>
<dbReference type="RefSeq" id="NP_598844.3">
    <molecule id="Q99LJ7-1"/>
    <property type="nucleotide sequence ID" value="NM_134083.4"/>
</dbReference>
<dbReference type="RefSeq" id="XP_006518445.1">
    <molecule id="Q99LJ7-1"/>
    <property type="nucleotide sequence ID" value="XM_006518382.4"/>
</dbReference>
<dbReference type="RefSeq" id="XP_006518446.1">
    <molecule id="Q99LJ7-1"/>
    <property type="nucleotide sequence ID" value="XM_006518383.4"/>
</dbReference>
<dbReference type="RefSeq" id="XP_006518447.1">
    <molecule id="Q99LJ7-1"/>
    <property type="nucleotide sequence ID" value="XM_006518384.2"/>
</dbReference>
<dbReference type="RefSeq" id="XP_006518448.1">
    <molecule id="Q99LJ7-1"/>
    <property type="nucleotide sequence ID" value="XM_006518385.4"/>
</dbReference>
<dbReference type="RefSeq" id="XP_006518449.1">
    <molecule id="Q99LJ7-2"/>
    <property type="nucleotide sequence ID" value="XM_006518386.3"/>
</dbReference>
<dbReference type="RefSeq" id="XP_011243193.1">
    <molecule id="Q99LJ7-1"/>
    <property type="nucleotide sequence ID" value="XM_011244891.4"/>
</dbReference>
<dbReference type="RefSeq" id="XP_030103451.1">
    <molecule id="Q99LJ7-2"/>
    <property type="nucleotide sequence ID" value="XM_030247591.2"/>
</dbReference>
<dbReference type="RefSeq" id="XP_036014266.1">
    <molecule id="Q99LJ7-1"/>
    <property type="nucleotide sequence ID" value="XM_036158373.1"/>
</dbReference>
<dbReference type="SMR" id="Q99LJ7"/>
<dbReference type="BioGRID" id="222895">
    <property type="interactions" value="1"/>
</dbReference>
<dbReference type="FunCoup" id="Q99LJ7">
    <property type="interactions" value="1509"/>
</dbReference>
<dbReference type="STRING" id="10090.ENSMUSP00000131588"/>
<dbReference type="GlyGen" id="Q99LJ7">
    <property type="glycosylation" value="1 site"/>
</dbReference>
<dbReference type="iPTMnet" id="Q99LJ7"/>
<dbReference type="PhosphoSitePlus" id="Q99LJ7"/>
<dbReference type="PaxDb" id="10090-ENSMUSP00000131588"/>
<dbReference type="PeptideAtlas" id="Q99LJ7"/>
<dbReference type="ProteomicsDB" id="254904">
    <molecule id="Q99LJ7-1"/>
</dbReference>
<dbReference type="ProteomicsDB" id="254905">
    <molecule id="Q99LJ7-2"/>
</dbReference>
<dbReference type="Pumba" id="Q99LJ7"/>
<dbReference type="Antibodypedia" id="23851">
    <property type="antibodies" value="187 antibodies from 28 providers"/>
</dbReference>
<dbReference type="DNASU" id="105670"/>
<dbReference type="Ensembl" id="ENSMUST00000022702.13">
    <molecule id="Q99LJ7-1"/>
    <property type="protein sequence ID" value="ENSMUSP00000022702.7"/>
    <property type="gene ID" value="ENSMUSG00000022106.15"/>
</dbReference>
<dbReference type="Ensembl" id="ENSMUST00000110952.10">
    <molecule id="Q99LJ7-1"/>
    <property type="protein sequence ID" value="ENSMUSP00000106577.4"/>
    <property type="gene ID" value="ENSMUSG00000022106.15"/>
</dbReference>
<dbReference type="Ensembl" id="ENSMUST00000164822.8">
    <molecule id="Q99LJ7-1"/>
    <property type="protein sequence ID" value="ENSMUSP00000131588.2"/>
    <property type="gene ID" value="ENSMUSG00000022106.15"/>
</dbReference>
<dbReference type="Ensembl" id="ENSMUST00000169479.8">
    <molecule id="Q99LJ7-1"/>
    <property type="protein sequence ID" value="ENSMUSP00000126898.2"/>
    <property type="gene ID" value="ENSMUSG00000022106.15"/>
</dbReference>
<dbReference type="Ensembl" id="ENSMUST00000169513.8">
    <molecule id="Q99LJ7-2"/>
    <property type="protein sequence ID" value="ENSMUSP00000128579.2"/>
    <property type="gene ID" value="ENSMUSG00000022106.15"/>
</dbReference>
<dbReference type="Ensembl" id="ENSMUST00000170677.8">
    <molecule id="Q99LJ7-2"/>
    <property type="protein sequence ID" value="ENSMUSP00000126510.2"/>
    <property type="gene ID" value="ENSMUSG00000022106.15"/>
</dbReference>
<dbReference type="GeneID" id="105670"/>
<dbReference type="KEGG" id="mmu:105670"/>
<dbReference type="UCSC" id="uc007upj.2">
    <molecule id="Q99LJ7-1"/>
    <property type="organism name" value="mouse"/>
</dbReference>
<dbReference type="AGR" id="MGI:1917200"/>
<dbReference type="CTD" id="1102"/>
<dbReference type="MGI" id="MGI:1917200">
    <property type="gene designation" value="Rcbtb2"/>
</dbReference>
<dbReference type="VEuPathDB" id="HostDB:ENSMUSG00000022106"/>
<dbReference type="eggNOG" id="KOG1426">
    <property type="taxonomic scope" value="Eukaryota"/>
</dbReference>
<dbReference type="GeneTree" id="ENSGT00940000158925"/>
<dbReference type="HOGENOM" id="CLU_029788_1_0_1"/>
<dbReference type="InParanoid" id="Q99LJ7"/>
<dbReference type="OMA" id="SYNEHTA"/>
<dbReference type="OrthoDB" id="16281at2759"/>
<dbReference type="PhylomeDB" id="Q99LJ7"/>
<dbReference type="TreeFam" id="TF329478"/>
<dbReference type="BioGRID-ORCS" id="105670">
    <property type="hits" value="1 hit in 60 CRISPR screens"/>
</dbReference>
<dbReference type="ChiTaRS" id="Rcbtb2">
    <property type="organism name" value="mouse"/>
</dbReference>
<dbReference type="PRO" id="PR:Q99LJ7"/>
<dbReference type="Proteomes" id="UP000000589">
    <property type="component" value="Chromosome 14"/>
</dbReference>
<dbReference type="RNAct" id="Q99LJ7">
    <property type="molecule type" value="protein"/>
</dbReference>
<dbReference type="Bgee" id="ENSMUSG00000022106">
    <property type="expression patterns" value="Expressed in ear vesicle and 249 other cell types or tissues"/>
</dbReference>
<dbReference type="ExpressionAtlas" id="Q99LJ7">
    <property type="expression patterns" value="baseline and differential"/>
</dbReference>
<dbReference type="GO" id="GO:0001669">
    <property type="term" value="C:acrosomal vesicle"/>
    <property type="evidence" value="ECO:0000314"/>
    <property type="project" value="MGI"/>
</dbReference>
<dbReference type="GO" id="GO:0008283">
    <property type="term" value="P:cell population proliferation"/>
    <property type="evidence" value="ECO:0000315"/>
    <property type="project" value="MGI"/>
</dbReference>
<dbReference type="GO" id="GO:0048565">
    <property type="term" value="P:digestive tract development"/>
    <property type="evidence" value="ECO:0000315"/>
    <property type="project" value="MGI"/>
</dbReference>
<dbReference type="GO" id="GO:0001889">
    <property type="term" value="P:liver development"/>
    <property type="evidence" value="ECO:0000315"/>
    <property type="project" value="MGI"/>
</dbReference>
<dbReference type="GO" id="GO:0048535">
    <property type="term" value="P:lymph node development"/>
    <property type="evidence" value="ECO:0000315"/>
    <property type="project" value="MGI"/>
</dbReference>
<dbReference type="GO" id="GO:0048536">
    <property type="term" value="P:spleen development"/>
    <property type="evidence" value="ECO:0000315"/>
    <property type="project" value="MGI"/>
</dbReference>
<dbReference type="CDD" id="cd18529">
    <property type="entry name" value="BACK_RCBTB2"/>
    <property type="match status" value="1"/>
</dbReference>
<dbReference type="CDD" id="cd18354">
    <property type="entry name" value="BTB_POZ_RCBTB2_CHC1L"/>
    <property type="match status" value="1"/>
</dbReference>
<dbReference type="FunFam" id="2.130.10.30:FF:000033">
    <property type="entry name" value="RCC1 and BTB domain-containing protein 2"/>
    <property type="match status" value="1"/>
</dbReference>
<dbReference type="FunFam" id="2.130.10.30:FF:000038">
    <property type="entry name" value="RCC1 and BTB domain-containing protein 2"/>
    <property type="match status" value="1"/>
</dbReference>
<dbReference type="FunFam" id="1.25.40.420:FF:000006">
    <property type="entry name" value="RCC1 and BTB domain-containing protein 2 isoform X1"/>
    <property type="match status" value="1"/>
</dbReference>
<dbReference type="Gene3D" id="1.25.40.420">
    <property type="match status" value="1"/>
</dbReference>
<dbReference type="Gene3D" id="3.30.710.10">
    <property type="entry name" value="Potassium Channel Kv1.1, Chain A"/>
    <property type="match status" value="1"/>
</dbReference>
<dbReference type="Gene3D" id="2.130.10.30">
    <property type="entry name" value="Regulator of chromosome condensation 1/beta-lactamase-inhibitor protein II"/>
    <property type="match status" value="1"/>
</dbReference>
<dbReference type="InterPro" id="IPR000210">
    <property type="entry name" value="BTB/POZ_dom"/>
</dbReference>
<dbReference type="InterPro" id="IPR009091">
    <property type="entry name" value="RCC1/BLIP-II"/>
</dbReference>
<dbReference type="InterPro" id="IPR000408">
    <property type="entry name" value="Reg_chr_condens"/>
</dbReference>
<dbReference type="InterPro" id="IPR051625">
    <property type="entry name" value="Signaling_Regulatory_Domain"/>
</dbReference>
<dbReference type="InterPro" id="IPR011333">
    <property type="entry name" value="SKP1/BTB/POZ_sf"/>
</dbReference>
<dbReference type="PANTHER" id="PTHR22872">
    <property type="entry name" value="BTK-BINDING PROTEIN-RELATED"/>
    <property type="match status" value="1"/>
</dbReference>
<dbReference type="PANTHER" id="PTHR22872:SF3">
    <property type="entry name" value="RCC1 AND BTB DOMAIN CONTAINING PROTEIN 2"/>
    <property type="match status" value="1"/>
</dbReference>
<dbReference type="Pfam" id="PF00651">
    <property type="entry name" value="BTB"/>
    <property type="match status" value="1"/>
</dbReference>
<dbReference type="Pfam" id="PF25390">
    <property type="entry name" value="WD40_RLD"/>
    <property type="match status" value="1"/>
</dbReference>
<dbReference type="PRINTS" id="PR00633">
    <property type="entry name" value="RCCNDNSATION"/>
</dbReference>
<dbReference type="SMART" id="SM00225">
    <property type="entry name" value="BTB"/>
    <property type="match status" value="1"/>
</dbReference>
<dbReference type="SUPFAM" id="SSF54695">
    <property type="entry name" value="POZ domain"/>
    <property type="match status" value="1"/>
</dbReference>
<dbReference type="SUPFAM" id="SSF50985">
    <property type="entry name" value="RCC1/BLIP-II"/>
    <property type="match status" value="1"/>
</dbReference>
<dbReference type="PROSITE" id="PS50097">
    <property type="entry name" value="BTB"/>
    <property type="match status" value="1"/>
</dbReference>
<dbReference type="PROSITE" id="PS00626">
    <property type="entry name" value="RCC1_2"/>
    <property type="match status" value="1"/>
</dbReference>
<dbReference type="PROSITE" id="PS50012">
    <property type="entry name" value="RCC1_3"/>
    <property type="match status" value="4"/>
</dbReference>
<keyword id="KW-0025">Alternative splicing</keyword>
<keyword id="KW-0968">Cytoplasmic vesicle</keyword>
<keyword id="KW-1185">Reference proteome</keyword>
<keyword id="KW-0677">Repeat</keyword>
<proteinExistence type="evidence at protein level"/>
<organism>
    <name type="scientific">Mus musculus</name>
    <name type="common">Mouse</name>
    <dbReference type="NCBI Taxonomy" id="10090"/>
    <lineage>
        <taxon>Eukaryota</taxon>
        <taxon>Metazoa</taxon>
        <taxon>Chordata</taxon>
        <taxon>Craniata</taxon>
        <taxon>Vertebrata</taxon>
        <taxon>Euteleostomi</taxon>
        <taxon>Mammalia</taxon>
        <taxon>Eutheria</taxon>
        <taxon>Euarchontoglires</taxon>
        <taxon>Glires</taxon>
        <taxon>Rodentia</taxon>
        <taxon>Myomorpha</taxon>
        <taxon>Muroidea</taxon>
        <taxon>Muridae</taxon>
        <taxon>Murinae</taxon>
        <taxon>Mus</taxon>
        <taxon>Mus</taxon>
    </lineage>
</organism>
<feature type="chain" id="PRO_0000206645" description="RCC1 and BTB domain-containing protein 2">
    <location>
        <begin position="1"/>
        <end position="551"/>
    </location>
</feature>
<feature type="repeat" description="RCC1 1" evidence="1">
    <location>
        <begin position="64"/>
        <end position="115"/>
    </location>
</feature>
<feature type="repeat" description="RCC1 2" evidence="1">
    <location>
        <begin position="117"/>
        <end position="169"/>
    </location>
</feature>
<feature type="repeat" description="RCC1 3" evidence="1">
    <location>
        <begin position="171"/>
        <end position="222"/>
    </location>
</feature>
<feature type="repeat" description="RCC1 4" evidence="1">
    <location>
        <begin position="223"/>
        <end position="274"/>
    </location>
</feature>
<feature type="repeat" description="RCC1 5" evidence="1">
    <location>
        <begin position="276"/>
        <end position="326"/>
    </location>
</feature>
<feature type="repeat" description="RCC1 6" evidence="1">
    <location>
        <begin position="328"/>
        <end position="382"/>
    </location>
</feature>
<feature type="domain" description="BTB" evidence="2">
    <location>
        <begin position="394"/>
        <end position="457"/>
    </location>
</feature>
<feature type="splice variant" id="VSP_016724" description="In isoform 2." evidence="4">
    <location>
        <begin position="1"/>
        <end position="24"/>
    </location>
</feature>
<feature type="sequence conflict" description="In Ref. 2; BAC27316." evidence="5" ref="2">
    <original>A</original>
    <variation>S</variation>
    <location>
        <position position="211"/>
    </location>
</feature>
<accession>Q99LJ7</accession>
<accession>G1EE51</accession>
<accession>Q3TUA3</accession>
<accession>Q8BMG2</accession>
<evidence type="ECO:0000255" key="1"/>
<evidence type="ECO:0000255" key="2">
    <source>
        <dbReference type="PROSITE-ProRule" id="PRU00037"/>
    </source>
</evidence>
<evidence type="ECO:0000269" key="3">
    <source>
    </source>
</evidence>
<evidence type="ECO:0000303" key="4">
    <source>
    </source>
</evidence>
<evidence type="ECO:0000305" key="5"/>
<evidence type="ECO:0000312" key="6">
    <source>
        <dbReference type="EMBL" id="AEK06434.1"/>
    </source>
</evidence>